<dbReference type="EMBL" id="X07503">
    <property type="protein sequence ID" value="CAA30386.1"/>
    <property type="molecule type" value="Genomic_DNA"/>
</dbReference>
<dbReference type="EMBL" id="X54113">
    <property type="protein sequence ID" value="CAA38052.1"/>
    <property type="molecule type" value="Genomic_DNA"/>
</dbReference>
<dbReference type="PIR" id="S01197">
    <property type="entry name" value="S01197"/>
</dbReference>
<dbReference type="SMR" id="P69075"/>
<dbReference type="GO" id="GO:0000786">
    <property type="term" value="C:nucleosome"/>
    <property type="evidence" value="ECO:0007669"/>
    <property type="project" value="UniProtKB-KW"/>
</dbReference>
<dbReference type="GO" id="GO:0005634">
    <property type="term" value="C:nucleus"/>
    <property type="evidence" value="ECO:0007669"/>
    <property type="project" value="UniProtKB-SubCell"/>
</dbReference>
<dbReference type="GO" id="GO:0003677">
    <property type="term" value="F:DNA binding"/>
    <property type="evidence" value="ECO:0007669"/>
    <property type="project" value="UniProtKB-KW"/>
</dbReference>
<dbReference type="GO" id="GO:0046982">
    <property type="term" value="F:protein heterodimerization activity"/>
    <property type="evidence" value="ECO:0007669"/>
    <property type="project" value="InterPro"/>
</dbReference>
<dbReference type="GO" id="GO:0030527">
    <property type="term" value="F:structural constituent of chromatin"/>
    <property type="evidence" value="ECO:0007669"/>
    <property type="project" value="InterPro"/>
</dbReference>
<dbReference type="CDD" id="cd22911">
    <property type="entry name" value="HFD_H3"/>
    <property type="match status" value="1"/>
</dbReference>
<dbReference type="FunFam" id="1.10.20.10:FF:000078">
    <property type="entry name" value="Histone H3"/>
    <property type="match status" value="1"/>
</dbReference>
<dbReference type="FunFam" id="1.10.20.10:FF:000044">
    <property type="entry name" value="Histone H3.3"/>
    <property type="match status" value="1"/>
</dbReference>
<dbReference type="Gene3D" id="1.10.20.10">
    <property type="entry name" value="Histone, subunit A"/>
    <property type="match status" value="1"/>
</dbReference>
<dbReference type="InterPro" id="IPR009072">
    <property type="entry name" value="Histone-fold"/>
</dbReference>
<dbReference type="InterPro" id="IPR007125">
    <property type="entry name" value="Histone_H2A/H2B/H3"/>
</dbReference>
<dbReference type="InterPro" id="IPR000164">
    <property type="entry name" value="Histone_H3/CENP-A"/>
</dbReference>
<dbReference type="PANTHER" id="PTHR11426">
    <property type="entry name" value="HISTONE H3"/>
    <property type="match status" value="1"/>
</dbReference>
<dbReference type="Pfam" id="PF00125">
    <property type="entry name" value="Histone"/>
    <property type="match status" value="1"/>
</dbReference>
<dbReference type="PRINTS" id="PR00622">
    <property type="entry name" value="HISTONEH3"/>
</dbReference>
<dbReference type="SMART" id="SM00428">
    <property type="entry name" value="H3"/>
    <property type="match status" value="1"/>
</dbReference>
<dbReference type="SUPFAM" id="SSF47113">
    <property type="entry name" value="Histone-fold"/>
    <property type="match status" value="1"/>
</dbReference>
<dbReference type="PROSITE" id="PS00322">
    <property type="entry name" value="HISTONE_H3_1"/>
    <property type="match status" value="1"/>
</dbReference>
<dbReference type="PROSITE" id="PS00959">
    <property type="entry name" value="HISTONE_H3_2"/>
    <property type="match status" value="1"/>
</dbReference>
<reference key="1">
    <citation type="journal article" date="1988" name="J. Mol. Evol.">
        <title>Histone genes in three sea star species: cluster arrangement, transcriptional polarity, and analyses of the flanking regions of H3 and H4 genes.</title>
        <authorList>
            <person name="Banfield D.C.D."/>
            <person name="Honda B.M."/>
            <person name="Smith M.J."/>
        </authorList>
    </citation>
    <scope>NUCLEOTIDE SEQUENCE [GENOMIC DNA]</scope>
    <source>
        <tissue>Sperm</tissue>
    </source>
</reference>
<reference key="2">
    <citation type="submission" date="1990-07" db="EMBL/GenBank/DDBJ databases">
        <title>Sequence and organisation of histone gene clusters in sea stars.</title>
        <authorList>
            <person name="Wu Y."/>
            <person name="Kowbel D."/>
            <person name="Smith M.J."/>
        </authorList>
    </citation>
    <scope>NUCLEOTIDE SEQUENCE [GENOMIC DNA]</scope>
</reference>
<feature type="initiator methionine" description="Removed" evidence="1">
    <location>
        <position position="1"/>
    </location>
</feature>
<feature type="chain" id="PRO_0000221315" description="Histone H3, embryonic">
    <location>
        <begin position="2"/>
        <end position="136"/>
    </location>
</feature>
<feature type="region of interest" description="Disordered" evidence="2">
    <location>
        <begin position="1"/>
        <end position="43"/>
    </location>
</feature>
<feature type="modified residue" description="N6-methylated lysine" evidence="1">
    <location>
        <position position="5"/>
    </location>
</feature>
<feature type="modified residue" description="N6-acetyllysine; alternate" evidence="1">
    <location>
        <position position="10"/>
    </location>
</feature>
<feature type="modified residue" description="N6-methylated lysine; alternate" evidence="1">
    <location>
        <position position="10"/>
    </location>
</feature>
<feature type="modified residue" description="Phosphoserine" evidence="1">
    <location>
        <position position="11"/>
    </location>
</feature>
<feature type="modified residue" description="N6-acetyllysine" evidence="1">
    <location>
        <position position="15"/>
    </location>
</feature>
<feature type="modified residue" description="N6-acetyllysine" evidence="1">
    <location>
        <position position="24"/>
    </location>
</feature>
<feature type="modified residue" description="N6-methylated lysine" evidence="1">
    <location>
        <position position="28"/>
    </location>
</feature>
<feature type="modified residue" description="N6-methylated lysine" evidence="1">
    <location>
        <position position="37"/>
    </location>
</feature>
<feature type="modified residue" description="N6-methylated lysine" evidence="1">
    <location>
        <position position="80"/>
    </location>
</feature>
<keyword id="KW-0007">Acetylation</keyword>
<keyword id="KW-0158">Chromosome</keyword>
<keyword id="KW-0238">DNA-binding</keyword>
<keyword id="KW-0488">Methylation</keyword>
<keyword id="KW-0544">Nucleosome core</keyword>
<keyword id="KW-0539">Nucleus</keyword>
<keyword id="KW-0597">Phosphoprotein</keyword>
<proteinExistence type="evidence at transcript level"/>
<evidence type="ECO:0000250" key="1"/>
<evidence type="ECO:0000256" key="2">
    <source>
        <dbReference type="SAM" id="MobiDB-lite"/>
    </source>
</evidence>
<evidence type="ECO:0000305" key="3"/>
<name>H3_PISOC</name>
<accession>P69075</accession>
<accession>P02298</accession>
<accession>P05320</accession>
<accession>P05321</accession>
<accession>P05322</accession>
<protein>
    <recommendedName>
        <fullName>Histone H3, embryonic</fullName>
    </recommendedName>
</protein>
<organism>
    <name type="scientific">Pisaster ochraceus</name>
    <name type="common">Ochre sea star</name>
    <name type="synonym">Asterias ochracea</name>
    <dbReference type="NCBI Taxonomy" id="7612"/>
    <lineage>
        <taxon>Eukaryota</taxon>
        <taxon>Metazoa</taxon>
        <taxon>Echinodermata</taxon>
        <taxon>Eleutherozoa</taxon>
        <taxon>Asterozoa</taxon>
        <taxon>Asteroidea</taxon>
        <taxon>Forcipulatacea</taxon>
        <taxon>Forcipulatida</taxon>
        <taxon>Asteriidae</taxon>
        <taxon>Pisaster</taxon>
    </lineage>
</organism>
<sequence>MARTKQTARKSTGGKAPRKQLATKAARKSAPATGGVKKPHRYRPGTVALREIRRYQKSTELLIRKLPFQRLVREIAQDFKTELRFQSSAVMALQEASEAYLVGLFEDTNLCAIHAKRVTIMPKDIQLARRIRGERA</sequence>
<comment type="function">
    <text>Core component of nucleosome. Nucleosomes wrap and compact DNA into chromatin, limiting DNA accessibility to the cellular machineries which require DNA as a template. Histones thereby play a central role in transcription regulation, DNA repair, DNA replication and chromosomal stability. DNA accessibility is regulated via a complex set of post-translational modifications of histones, also called histone code, and nucleosome remodeling.</text>
</comment>
<comment type="subunit">
    <text>The nucleosome is a histone octamer containing two molecules each of H2A, H2B, H3 and H4 assembled in one H3-H4 heterotetramer and two H2A-H2B heterodimers. The octamer wraps approximately 147 bp of DNA.</text>
</comment>
<comment type="subcellular location">
    <subcellularLocation>
        <location evidence="1">Nucleus</location>
    </subcellularLocation>
    <subcellularLocation>
        <location evidence="1">Chromosome</location>
    </subcellularLocation>
</comment>
<comment type="developmental stage">
    <text>This histone is expressed during late embryonic development.</text>
</comment>
<comment type="PTM">
    <text evidence="1">Acetylation is generally linked to gene activation.</text>
</comment>
<comment type="PTM">
    <text evidence="1">Methylation at Lys-5 is linked to gene activation. Methylation at Lys-10 is linked to gene repression (By similarity).</text>
</comment>
<comment type="similarity">
    <text evidence="3">Belongs to the histone H3 family.</text>
</comment>